<name>RS13_PIG</name>
<feature type="chain" id="PRO_0000115663" description="Small ribosomal subunit protein uS15">
    <location>
        <begin position="1"/>
        <end position="107" status="greater than"/>
    </location>
</feature>
<feature type="modified residue" description="N6-acetyllysine; alternate" evidence="1">
    <location>
        <position position="27"/>
    </location>
</feature>
<feature type="modified residue" description="N6-succinyllysine; alternate" evidence="2">
    <location>
        <position position="27"/>
    </location>
</feature>
<feature type="modified residue" description="Phosphoserine" evidence="1">
    <location>
        <position position="30"/>
    </location>
</feature>
<feature type="modified residue" description="N6-succinyllysine" evidence="2">
    <location>
        <position position="34"/>
    </location>
</feature>
<feature type="modified residue" description="Phosphotyrosine" evidence="1">
    <location>
        <position position="38"/>
    </location>
</feature>
<feature type="cross-link" description="Glycyl lysine isopeptide (Lys-Gly) (interchain with G-Cter in ubiquitin)" evidence="1">
    <location>
        <position position="27"/>
    </location>
</feature>
<feature type="cross-link" description="Glycyl lysine isopeptide (Lys-Gly) (interchain with G-Cter in SUMO2)" evidence="1">
    <location>
        <position position="43"/>
    </location>
</feature>
<feature type="non-terminal residue">
    <location>
        <position position="107"/>
    </location>
</feature>
<organism>
    <name type="scientific">Sus scrofa</name>
    <name type="common">Pig</name>
    <dbReference type="NCBI Taxonomy" id="9823"/>
    <lineage>
        <taxon>Eukaryota</taxon>
        <taxon>Metazoa</taxon>
        <taxon>Chordata</taxon>
        <taxon>Craniata</taxon>
        <taxon>Vertebrata</taxon>
        <taxon>Euteleostomi</taxon>
        <taxon>Mammalia</taxon>
        <taxon>Eutheria</taxon>
        <taxon>Laurasiatheria</taxon>
        <taxon>Artiodactyla</taxon>
        <taxon>Suina</taxon>
        <taxon>Suidae</taxon>
        <taxon>Sus</taxon>
    </lineage>
</organism>
<dbReference type="EMBL" id="F14525">
    <property type="protein sequence ID" value="CAA23105.1"/>
    <property type="molecule type" value="mRNA"/>
</dbReference>
<dbReference type="SMR" id="P62279"/>
<dbReference type="STRING" id="9823.ENSSSCP00000014220"/>
<dbReference type="PaxDb" id="9823-ENSSSCP00000014220"/>
<dbReference type="PeptideAtlas" id="P62279"/>
<dbReference type="eggNOG" id="KOG0400">
    <property type="taxonomic scope" value="Eukaryota"/>
</dbReference>
<dbReference type="HOGENOM" id="CLU_090139_1_0_1"/>
<dbReference type="InParanoid" id="P62279"/>
<dbReference type="Proteomes" id="UP000008227">
    <property type="component" value="Unplaced"/>
</dbReference>
<dbReference type="Proteomes" id="UP000314985">
    <property type="component" value="Unplaced"/>
</dbReference>
<dbReference type="Proteomes" id="UP000694570">
    <property type="component" value="Unplaced"/>
</dbReference>
<dbReference type="Proteomes" id="UP000694571">
    <property type="component" value="Unplaced"/>
</dbReference>
<dbReference type="Proteomes" id="UP000694720">
    <property type="component" value="Unplaced"/>
</dbReference>
<dbReference type="Proteomes" id="UP000694722">
    <property type="component" value="Unplaced"/>
</dbReference>
<dbReference type="Proteomes" id="UP000694723">
    <property type="component" value="Unplaced"/>
</dbReference>
<dbReference type="Proteomes" id="UP000694724">
    <property type="component" value="Unplaced"/>
</dbReference>
<dbReference type="Proteomes" id="UP000694725">
    <property type="component" value="Unplaced"/>
</dbReference>
<dbReference type="Proteomes" id="UP000694726">
    <property type="component" value="Unplaced"/>
</dbReference>
<dbReference type="Proteomes" id="UP000694727">
    <property type="component" value="Unplaced"/>
</dbReference>
<dbReference type="Proteomes" id="UP000694728">
    <property type="component" value="Unplaced"/>
</dbReference>
<dbReference type="GO" id="GO:0022627">
    <property type="term" value="C:cytosolic small ribosomal subunit"/>
    <property type="evidence" value="ECO:0000318"/>
    <property type="project" value="GO_Central"/>
</dbReference>
<dbReference type="GO" id="GO:0005730">
    <property type="term" value="C:nucleolus"/>
    <property type="evidence" value="ECO:0000318"/>
    <property type="project" value="GO_Central"/>
</dbReference>
<dbReference type="GO" id="GO:0032040">
    <property type="term" value="C:small-subunit processome"/>
    <property type="evidence" value="ECO:0000250"/>
    <property type="project" value="UniProtKB"/>
</dbReference>
<dbReference type="GO" id="GO:0070181">
    <property type="term" value="F:small ribosomal subunit rRNA binding"/>
    <property type="evidence" value="ECO:0000318"/>
    <property type="project" value="GO_Central"/>
</dbReference>
<dbReference type="GO" id="GO:0003735">
    <property type="term" value="F:structural constituent of ribosome"/>
    <property type="evidence" value="ECO:0000318"/>
    <property type="project" value="GO_Central"/>
</dbReference>
<dbReference type="GO" id="GO:0042274">
    <property type="term" value="P:ribosomal small subunit biogenesis"/>
    <property type="evidence" value="ECO:0000250"/>
    <property type="project" value="UniProtKB"/>
</dbReference>
<dbReference type="GO" id="GO:0006412">
    <property type="term" value="P:translation"/>
    <property type="evidence" value="ECO:0007669"/>
    <property type="project" value="InterPro"/>
</dbReference>
<dbReference type="FunFam" id="4.10.860.130:FF:000001">
    <property type="entry name" value="40S ribosomal protein S13"/>
    <property type="match status" value="1"/>
</dbReference>
<dbReference type="Gene3D" id="4.10.860.130">
    <property type="match status" value="1"/>
</dbReference>
<dbReference type="Gene3D" id="1.10.287.10">
    <property type="entry name" value="S15/NS1, RNA-binding"/>
    <property type="match status" value="1"/>
</dbReference>
<dbReference type="InterPro" id="IPR023029">
    <property type="entry name" value="Ribosomal_uS15_arc_euk"/>
</dbReference>
<dbReference type="InterPro" id="IPR012606">
    <property type="entry name" value="Ribosomal_uS15_N"/>
</dbReference>
<dbReference type="InterPro" id="IPR009068">
    <property type="entry name" value="uS15_NS1_RNA-bd_sf"/>
</dbReference>
<dbReference type="PANTHER" id="PTHR11885">
    <property type="entry name" value="RIBOSOMAL PROTEIN S15P/S13E"/>
    <property type="match status" value="1"/>
</dbReference>
<dbReference type="PANTHER" id="PTHR11885:SF6">
    <property type="entry name" value="SMALL RIBOSOMAL SUBUNIT PROTEIN US15"/>
    <property type="match status" value="1"/>
</dbReference>
<dbReference type="Pfam" id="PF08069">
    <property type="entry name" value="Ribosomal_S13_N"/>
    <property type="match status" value="1"/>
</dbReference>
<dbReference type="SMART" id="SM01386">
    <property type="entry name" value="Ribosomal_S13_N"/>
    <property type="match status" value="1"/>
</dbReference>
<dbReference type="SUPFAM" id="SSF47060">
    <property type="entry name" value="S15/NS1 RNA-binding domain"/>
    <property type="match status" value="1"/>
</dbReference>
<sequence length="107" mass="12034">MGRMHAPGKGLSQSALPYRRSVPTWLKLTSDDVKEQIYKLAKKGLTPSQIGVILRDSHGVAQVRFVTGNKILRILKSKGLAPDLPEDLYHLIKKAVAVRKHLERNRK</sequence>
<comment type="function">
    <text evidence="1">Component of the small ribosomal subunit. The ribosome is a large ribonucleoprotein complex responsible for the synthesis of proteins in the cell. Part of the small subunit (SSU) processome, first precursor of the small eukaryotic ribosomal subunit. During the assembly of the SSU processome in the nucleolus, many ribosome biogenesis factors, an RNA chaperone and ribosomal proteins associate with the nascent pre-rRNA and work in concert to generate RNA folding, modifications, rearrangements and cleavage as well as targeted degradation of pre-ribosomal RNA by the RNA exosome.</text>
</comment>
<comment type="subunit">
    <text evidence="1">Component of the small ribosomal subunit. Part of the small subunit (SSU) processome, composed of more than 70 proteins and the RNA chaperone small nucleolar RNA (snoRNA) U3.</text>
</comment>
<comment type="subcellular location">
    <subcellularLocation>
        <location evidence="1">Cytoplasm</location>
    </subcellularLocation>
    <subcellularLocation>
        <location evidence="1">Nucleus</location>
        <location evidence="1">Nucleolus</location>
    </subcellularLocation>
</comment>
<comment type="PTM">
    <text evidence="1">Ubiquitinated at Lys-27 by RNF14 and RNF25 in response to ribosome collisions (ribosome stalling).</text>
</comment>
<comment type="similarity">
    <text evidence="3">Belongs to the universal ribosomal protein uS15 family.</text>
</comment>
<evidence type="ECO:0000250" key="1">
    <source>
        <dbReference type="UniProtKB" id="P62277"/>
    </source>
</evidence>
<evidence type="ECO:0000250" key="2">
    <source>
        <dbReference type="UniProtKB" id="P62301"/>
    </source>
</evidence>
<evidence type="ECO:0000305" key="3"/>
<reference key="1">
    <citation type="journal article" date="1996" name="Mamm. Genome">
        <title>Evaluation and characterization of a porcine small intestine cDNA library: analysis of 839 clones.</title>
        <authorList>
            <person name="Winteroe A.K."/>
            <person name="Fredholm M."/>
            <person name="Davies W."/>
        </authorList>
    </citation>
    <scope>NUCLEOTIDE SEQUENCE [LARGE SCALE MRNA]</scope>
    <source>
        <tissue>Small intestine</tissue>
    </source>
</reference>
<proteinExistence type="evidence at transcript level"/>
<accession>P62279</accession>
<accession>P19116</accession>
<accession>Q02546</accession>
<accession>Q29200</accession>
<keyword id="KW-0007">Acetylation</keyword>
<keyword id="KW-0963">Cytoplasm</keyword>
<keyword id="KW-1017">Isopeptide bond</keyword>
<keyword id="KW-0539">Nucleus</keyword>
<keyword id="KW-0597">Phosphoprotein</keyword>
<keyword id="KW-1185">Reference proteome</keyword>
<keyword id="KW-0687">Ribonucleoprotein</keyword>
<keyword id="KW-0689">Ribosomal protein</keyword>
<keyword id="KW-0832">Ubl conjugation</keyword>
<gene>
    <name type="primary">RPS13</name>
</gene>
<protein>
    <recommendedName>
        <fullName evidence="3">Small ribosomal subunit protein uS15</fullName>
    </recommendedName>
    <alternativeName>
        <fullName>40S ribosomal protein S13</fullName>
    </alternativeName>
</protein>